<dbReference type="EMBL" id="CP000381">
    <property type="protein sequence ID" value="ABX74172.1"/>
    <property type="molecule type" value="Genomic_DNA"/>
</dbReference>
<dbReference type="RefSeq" id="WP_002236247.1">
    <property type="nucleotide sequence ID" value="NC_010120.1"/>
</dbReference>
<dbReference type="SMR" id="A9M478"/>
<dbReference type="KEGG" id="nmn:NMCC_2054"/>
<dbReference type="HOGENOM" id="CLU_115353_1_1_4"/>
<dbReference type="Proteomes" id="UP000001177">
    <property type="component" value="Chromosome"/>
</dbReference>
<dbReference type="GO" id="GO:0003676">
    <property type="term" value="F:nucleic acid binding"/>
    <property type="evidence" value="ECO:0007669"/>
    <property type="project" value="InterPro"/>
</dbReference>
<dbReference type="Gene3D" id="3.40.1350.10">
    <property type="match status" value="1"/>
</dbReference>
<dbReference type="HAMAP" id="MF_00048">
    <property type="entry name" value="UPF0102"/>
    <property type="match status" value="1"/>
</dbReference>
<dbReference type="InterPro" id="IPR011335">
    <property type="entry name" value="Restrct_endonuc-II-like"/>
</dbReference>
<dbReference type="InterPro" id="IPR011856">
    <property type="entry name" value="tRNA_endonuc-like_dom_sf"/>
</dbReference>
<dbReference type="InterPro" id="IPR003509">
    <property type="entry name" value="UPF0102_YraN-like"/>
</dbReference>
<dbReference type="NCBIfam" id="NF009150">
    <property type="entry name" value="PRK12497.1-3"/>
    <property type="match status" value="1"/>
</dbReference>
<dbReference type="NCBIfam" id="TIGR00252">
    <property type="entry name" value="YraN family protein"/>
    <property type="match status" value="1"/>
</dbReference>
<dbReference type="PANTHER" id="PTHR34039">
    <property type="entry name" value="UPF0102 PROTEIN YRAN"/>
    <property type="match status" value="1"/>
</dbReference>
<dbReference type="PANTHER" id="PTHR34039:SF1">
    <property type="entry name" value="UPF0102 PROTEIN YRAN"/>
    <property type="match status" value="1"/>
</dbReference>
<dbReference type="Pfam" id="PF02021">
    <property type="entry name" value="UPF0102"/>
    <property type="match status" value="1"/>
</dbReference>
<dbReference type="SUPFAM" id="SSF52980">
    <property type="entry name" value="Restriction endonuclease-like"/>
    <property type="match status" value="1"/>
</dbReference>
<gene>
    <name type="ordered locus">NMCC_2054</name>
</gene>
<accession>A9M478</accession>
<organism>
    <name type="scientific">Neisseria meningitidis serogroup C (strain 053442)</name>
    <dbReference type="NCBI Taxonomy" id="374833"/>
    <lineage>
        <taxon>Bacteria</taxon>
        <taxon>Pseudomonadati</taxon>
        <taxon>Pseudomonadota</taxon>
        <taxon>Betaproteobacteria</taxon>
        <taxon>Neisseriales</taxon>
        <taxon>Neisseriaceae</taxon>
        <taxon>Neisseria</taxon>
    </lineage>
</organism>
<protein>
    <recommendedName>
        <fullName evidence="1">UPF0102 protein NMCC_2054</fullName>
    </recommendedName>
</protein>
<feature type="chain" id="PRO_1000074815" description="UPF0102 protein NMCC_2054">
    <location>
        <begin position="1"/>
        <end position="115"/>
    </location>
</feature>
<sequence>MRLNHKQGEAGEDAALAFLQSQGCTLLARNWHCAYGEIDLIVKNGGMILFVEVKYRKNRQFGGVAYSISPSKLLKLQRSVEYYLQQNRLTNVPCRLDAVLIEGNRPPEWIQNITG</sequence>
<evidence type="ECO:0000255" key="1">
    <source>
        <dbReference type="HAMAP-Rule" id="MF_00048"/>
    </source>
</evidence>
<name>Y2054_NEIM0</name>
<proteinExistence type="inferred from homology"/>
<comment type="similarity">
    <text evidence="1">Belongs to the UPF0102 family.</text>
</comment>
<reference key="1">
    <citation type="journal article" date="2008" name="Genomics">
        <title>Characterization of ST-4821 complex, a unique Neisseria meningitidis clone.</title>
        <authorList>
            <person name="Peng J."/>
            <person name="Yang L."/>
            <person name="Yang F."/>
            <person name="Yang J."/>
            <person name="Yan Y."/>
            <person name="Nie H."/>
            <person name="Zhang X."/>
            <person name="Xiong Z."/>
            <person name="Jiang Y."/>
            <person name="Cheng F."/>
            <person name="Xu X."/>
            <person name="Chen S."/>
            <person name="Sun L."/>
            <person name="Li W."/>
            <person name="Shen Y."/>
            <person name="Shao Z."/>
            <person name="Liang X."/>
            <person name="Xu J."/>
            <person name="Jin Q."/>
        </authorList>
    </citation>
    <scope>NUCLEOTIDE SEQUENCE [LARGE SCALE GENOMIC DNA]</scope>
    <source>
        <strain>053442</strain>
    </source>
</reference>